<accession>Q7N8M2</accession>
<reference key="1">
    <citation type="journal article" date="2003" name="Nat. Biotechnol.">
        <title>The genome sequence of the entomopathogenic bacterium Photorhabdus luminescens.</title>
        <authorList>
            <person name="Duchaud E."/>
            <person name="Rusniok C."/>
            <person name="Frangeul L."/>
            <person name="Buchrieser C."/>
            <person name="Givaudan A."/>
            <person name="Taourit S."/>
            <person name="Bocs S."/>
            <person name="Boursaux-Eude C."/>
            <person name="Chandler M."/>
            <person name="Charles J.-F."/>
            <person name="Dassa E."/>
            <person name="Derose R."/>
            <person name="Derzelle S."/>
            <person name="Freyssinet G."/>
            <person name="Gaudriault S."/>
            <person name="Medigue C."/>
            <person name="Lanois A."/>
            <person name="Powell K."/>
            <person name="Siguier P."/>
            <person name="Vincent R."/>
            <person name="Wingate V."/>
            <person name="Zouine M."/>
            <person name="Glaser P."/>
            <person name="Boemare N."/>
            <person name="Danchin A."/>
            <person name="Kunst F."/>
        </authorList>
    </citation>
    <scope>NUCLEOTIDE SEQUENCE [LARGE SCALE GENOMIC DNA]</scope>
    <source>
        <strain>DSM 15139 / CIP 105565 / TT01</strain>
    </source>
</reference>
<dbReference type="EC" id="7.4.2.11" evidence="1"/>
<dbReference type="EMBL" id="BX571861">
    <property type="protein sequence ID" value="CAE12992.1"/>
    <property type="molecule type" value="Genomic_DNA"/>
</dbReference>
<dbReference type="RefSeq" id="WP_011145073.1">
    <property type="nucleotide sequence ID" value="NC_005126.1"/>
</dbReference>
<dbReference type="SMR" id="Q7N8M2"/>
<dbReference type="STRING" id="243265.plu0697"/>
<dbReference type="GeneID" id="48846986"/>
<dbReference type="KEGG" id="plu:plu0697"/>
<dbReference type="eggNOG" id="COG1135">
    <property type="taxonomic scope" value="Bacteria"/>
</dbReference>
<dbReference type="HOGENOM" id="CLU_000604_1_3_6"/>
<dbReference type="OrthoDB" id="9802264at2"/>
<dbReference type="Proteomes" id="UP000002514">
    <property type="component" value="Chromosome"/>
</dbReference>
<dbReference type="GO" id="GO:0009276">
    <property type="term" value="C:Gram-negative-bacterium-type cell wall"/>
    <property type="evidence" value="ECO:0007669"/>
    <property type="project" value="InterPro"/>
</dbReference>
<dbReference type="GO" id="GO:0005886">
    <property type="term" value="C:plasma membrane"/>
    <property type="evidence" value="ECO:0007669"/>
    <property type="project" value="UniProtKB-SubCell"/>
</dbReference>
<dbReference type="GO" id="GO:0033232">
    <property type="term" value="F:ABC-type D-methionine transporter activity"/>
    <property type="evidence" value="ECO:0007669"/>
    <property type="project" value="UniProtKB-EC"/>
</dbReference>
<dbReference type="GO" id="GO:0005524">
    <property type="term" value="F:ATP binding"/>
    <property type="evidence" value="ECO:0007669"/>
    <property type="project" value="UniProtKB-KW"/>
</dbReference>
<dbReference type="GO" id="GO:0016887">
    <property type="term" value="F:ATP hydrolysis activity"/>
    <property type="evidence" value="ECO:0007669"/>
    <property type="project" value="InterPro"/>
</dbReference>
<dbReference type="CDD" id="cd03258">
    <property type="entry name" value="ABC_MetN_methionine_transporter"/>
    <property type="match status" value="1"/>
</dbReference>
<dbReference type="FunFam" id="3.40.50.300:FF:000233">
    <property type="entry name" value="Methionine import ATP-binding protein MetN"/>
    <property type="match status" value="1"/>
</dbReference>
<dbReference type="Gene3D" id="3.30.70.260">
    <property type="match status" value="1"/>
</dbReference>
<dbReference type="Gene3D" id="3.40.50.300">
    <property type="entry name" value="P-loop containing nucleotide triphosphate hydrolases"/>
    <property type="match status" value="1"/>
</dbReference>
<dbReference type="InterPro" id="IPR003593">
    <property type="entry name" value="AAA+_ATPase"/>
</dbReference>
<dbReference type="InterPro" id="IPR012692">
    <property type="entry name" value="ABC_MetN_proteobac"/>
</dbReference>
<dbReference type="InterPro" id="IPR003439">
    <property type="entry name" value="ABC_transporter-like_ATP-bd"/>
</dbReference>
<dbReference type="InterPro" id="IPR017871">
    <property type="entry name" value="ABC_transporter-like_CS"/>
</dbReference>
<dbReference type="InterPro" id="IPR045865">
    <property type="entry name" value="ACT-like_dom_sf"/>
</dbReference>
<dbReference type="InterPro" id="IPR041701">
    <property type="entry name" value="MetN_ABC"/>
</dbReference>
<dbReference type="InterPro" id="IPR050086">
    <property type="entry name" value="MetN_ABC_transporter-like"/>
</dbReference>
<dbReference type="InterPro" id="IPR018449">
    <property type="entry name" value="NIL_domain"/>
</dbReference>
<dbReference type="InterPro" id="IPR027417">
    <property type="entry name" value="P-loop_NTPase"/>
</dbReference>
<dbReference type="NCBIfam" id="TIGR02314">
    <property type="entry name" value="ABC_MetN"/>
    <property type="match status" value="1"/>
</dbReference>
<dbReference type="PANTHER" id="PTHR43166">
    <property type="entry name" value="AMINO ACID IMPORT ATP-BINDING PROTEIN"/>
    <property type="match status" value="1"/>
</dbReference>
<dbReference type="PANTHER" id="PTHR43166:SF30">
    <property type="entry name" value="METHIONINE IMPORT ATP-BINDING PROTEIN METN"/>
    <property type="match status" value="1"/>
</dbReference>
<dbReference type="Pfam" id="PF00005">
    <property type="entry name" value="ABC_tran"/>
    <property type="match status" value="1"/>
</dbReference>
<dbReference type="Pfam" id="PF09383">
    <property type="entry name" value="NIL"/>
    <property type="match status" value="1"/>
</dbReference>
<dbReference type="SMART" id="SM00382">
    <property type="entry name" value="AAA"/>
    <property type="match status" value="1"/>
</dbReference>
<dbReference type="SMART" id="SM00930">
    <property type="entry name" value="NIL"/>
    <property type="match status" value="1"/>
</dbReference>
<dbReference type="SUPFAM" id="SSF55021">
    <property type="entry name" value="ACT-like"/>
    <property type="match status" value="1"/>
</dbReference>
<dbReference type="SUPFAM" id="SSF52540">
    <property type="entry name" value="P-loop containing nucleoside triphosphate hydrolases"/>
    <property type="match status" value="1"/>
</dbReference>
<dbReference type="PROSITE" id="PS00211">
    <property type="entry name" value="ABC_TRANSPORTER_1"/>
    <property type="match status" value="1"/>
</dbReference>
<dbReference type="PROSITE" id="PS50893">
    <property type="entry name" value="ABC_TRANSPORTER_2"/>
    <property type="match status" value="1"/>
</dbReference>
<dbReference type="PROSITE" id="PS51264">
    <property type="entry name" value="METN"/>
    <property type="match status" value="1"/>
</dbReference>
<evidence type="ECO:0000255" key="1">
    <source>
        <dbReference type="HAMAP-Rule" id="MF_01719"/>
    </source>
</evidence>
<proteinExistence type="inferred from homology"/>
<organism>
    <name type="scientific">Photorhabdus laumondii subsp. laumondii (strain DSM 15139 / CIP 105565 / TT01)</name>
    <name type="common">Photorhabdus luminescens subsp. laumondii</name>
    <dbReference type="NCBI Taxonomy" id="243265"/>
    <lineage>
        <taxon>Bacteria</taxon>
        <taxon>Pseudomonadati</taxon>
        <taxon>Pseudomonadota</taxon>
        <taxon>Gammaproteobacteria</taxon>
        <taxon>Enterobacterales</taxon>
        <taxon>Morganellaceae</taxon>
        <taxon>Photorhabdus</taxon>
    </lineage>
</organism>
<comment type="function">
    <text evidence="1">Part of the ABC transporter complex MetNIQ involved in methionine import. Responsible for energy coupling to the transport system.</text>
</comment>
<comment type="catalytic activity">
    <reaction evidence="1">
        <text>L-methionine(out) + ATP + H2O = L-methionine(in) + ADP + phosphate + H(+)</text>
        <dbReference type="Rhea" id="RHEA:29779"/>
        <dbReference type="ChEBI" id="CHEBI:15377"/>
        <dbReference type="ChEBI" id="CHEBI:15378"/>
        <dbReference type="ChEBI" id="CHEBI:30616"/>
        <dbReference type="ChEBI" id="CHEBI:43474"/>
        <dbReference type="ChEBI" id="CHEBI:57844"/>
        <dbReference type="ChEBI" id="CHEBI:456216"/>
        <dbReference type="EC" id="7.4.2.11"/>
    </reaction>
</comment>
<comment type="catalytic activity">
    <reaction evidence="1">
        <text>D-methionine(out) + ATP + H2O = D-methionine(in) + ADP + phosphate + H(+)</text>
        <dbReference type="Rhea" id="RHEA:29767"/>
        <dbReference type="ChEBI" id="CHEBI:15377"/>
        <dbReference type="ChEBI" id="CHEBI:15378"/>
        <dbReference type="ChEBI" id="CHEBI:30616"/>
        <dbReference type="ChEBI" id="CHEBI:43474"/>
        <dbReference type="ChEBI" id="CHEBI:57932"/>
        <dbReference type="ChEBI" id="CHEBI:456216"/>
        <dbReference type="EC" id="7.4.2.11"/>
    </reaction>
</comment>
<comment type="subunit">
    <text evidence="1">The complex is composed of two ATP-binding proteins (MetN), two transmembrane proteins (MetI) and a solute-binding protein (MetQ).</text>
</comment>
<comment type="subcellular location">
    <subcellularLocation>
        <location evidence="1">Cell inner membrane</location>
        <topology evidence="1">Peripheral membrane protein</topology>
    </subcellularLocation>
</comment>
<comment type="similarity">
    <text evidence="1">Belongs to the ABC transporter superfamily. Methionine importer (TC 3.A.1.24) family.</text>
</comment>
<sequence>MIKLFHINKIFQQGARSINALSDISLHVPQGQIYGVIGSSGAGKSTLIRCVNMLERPTSGQVLVNGQDLTILSDSDLTRARRRIGMIFQHFNLLSSRTVFGNIALPLELDNIPKAEIKKRVDELLELVGLTDKHDAYPANLSGGQKQRVAIARALANSPKVLLCDEATSALDPATTRSILELLKDINRRLGLTILLITHEMDVVKRICDQVAVISGGQLIEQDIVSEVFSHPKTPIAQAFIQSTLHLDIPEDYVQKMQSHPAPNLSPLLKLEFTGQSVDAPLISMAVRRFNIDMNILSSQIDYAGGVKFGVMLAELHGENGGVESTIKFLQDHHVKVEVLGYV</sequence>
<gene>
    <name evidence="1" type="primary">metN</name>
    <name type="ordered locus">plu0697</name>
</gene>
<keyword id="KW-0029">Amino-acid transport</keyword>
<keyword id="KW-0067">ATP-binding</keyword>
<keyword id="KW-0997">Cell inner membrane</keyword>
<keyword id="KW-1003">Cell membrane</keyword>
<keyword id="KW-0472">Membrane</keyword>
<keyword id="KW-0547">Nucleotide-binding</keyword>
<keyword id="KW-1185">Reference proteome</keyword>
<keyword id="KW-1278">Translocase</keyword>
<keyword id="KW-0813">Transport</keyword>
<protein>
    <recommendedName>
        <fullName evidence="1">Methionine import ATP-binding protein MetN</fullName>
        <ecNumber evidence="1">7.4.2.11</ecNumber>
    </recommendedName>
</protein>
<name>METN_PHOLL</name>
<feature type="chain" id="PRO_0000270341" description="Methionine import ATP-binding protein MetN">
    <location>
        <begin position="1"/>
        <end position="343"/>
    </location>
</feature>
<feature type="domain" description="ABC transporter" evidence="1">
    <location>
        <begin position="2"/>
        <end position="241"/>
    </location>
</feature>
<feature type="binding site" evidence="1">
    <location>
        <begin position="38"/>
        <end position="45"/>
    </location>
    <ligand>
        <name>ATP</name>
        <dbReference type="ChEBI" id="CHEBI:30616"/>
    </ligand>
</feature>